<evidence type="ECO:0000250" key="1">
    <source>
        <dbReference type="UniProtKB" id="Q9Y4E8"/>
    </source>
</evidence>
<evidence type="ECO:0000255" key="2">
    <source>
        <dbReference type="PROSITE-ProRule" id="PRU00613"/>
    </source>
</evidence>
<evidence type="ECO:0000255" key="3">
    <source>
        <dbReference type="PROSITE-ProRule" id="PRU10092"/>
    </source>
</evidence>
<evidence type="ECO:0000255" key="4">
    <source>
        <dbReference type="PROSITE-ProRule" id="PRU10093"/>
    </source>
</evidence>
<evidence type="ECO:0000256" key="5">
    <source>
        <dbReference type="SAM" id="MobiDB-lite"/>
    </source>
</evidence>
<evidence type="ECO:0000303" key="6">
    <source ref="2"/>
</evidence>
<evidence type="ECO:0000305" key="7"/>
<proteinExistence type="evidence at transcript level"/>
<protein>
    <recommendedName>
        <fullName>Ubiquitin carboxyl-terminal hydrolase 15</fullName>
        <ecNumber evidence="1">3.4.19.12</ecNumber>
    </recommendedName>
    <alternativeName>
        <fullName>Deubiquitinating enzyme 15</fullName>
    </alternativeName>
    <alternativeName>
        <fullName>Ubiquitin thioesterase 15</fullName>
    </alternativeName>
    <alternativeName>
        <fullName>Ubiquitin-specific-processing protease 15</fullName>
    </alternativeName>
</protein>
<feature type="chain" id="PRO_0000420491" description="Ubiquitin carboxyl-terminal hydrolase 15">
    <location>
        <begin position="1"/>
        <end position="982"/>
    </location>
</feature>
<feature type="domain" description="DUSP" evidence="2">
    <location>
        <begin position="7"/>
        <end position="118"/>
    </location>
</feature>
<feature type="domain" description="USP">
    <location>
        <begin position="288"/>
        <end position="933"/>
    </location>
</feature>
<feature type="region of interest" description="Disordered" evidence="5">
    <location>
        <begin position="623"/>
        <end position="695"/>
    </location>
</feature>
<feature type="region of interest" description="Disordered" evidence="5">
    <location>
        <begin position="950"/>
        <end position="982"/>
    </location>
</feature>
<feature type="compositionally biased region" description="Acidic residues" evidence="5">
    <location>
        <begin position="655"/>
        <end position="672"/>
    </location>
</feature>
<feature type="compositionally biased region" description="Acidic residues" evidence="5">
    <location>
        <begin position="962"/>
        <end position="975"/>
    </location>
</feature>
<feature type="active site" description="Nucleophile" evidence="3 4">
    <location>
        <position position="297"/>
    </location>
</feature>
<feature type="active site" description="Proton acceptor" evidence="3 4">
    <location>
        <position position="891"/>
    </location>
</feature>
<feature type="splice variant" id="VSP_044519" description="In isoform 2." evidence="6">
    <original>KSSGIPNFSTLPKISPSSLSNNYNNFNSRI</original>
    <variation>N</variation>
    <location>
        <begin position="227"/>
        <end position="256"/>
    </location>
</feature>
<feature type="sequence conflict" description="In Ref. 2; AAI66318." evidence="7" ref="2">
    <original>N</original>
    <variation>I</variation>
    <location>
        <position position="626"/>
    </location>
</feature>
<feature type="sequence conflict" description="In Ref. 2; AAI66318." evidence="7" ref="2">
    <original>CMHTN</original>
    <variation>YLEKL</variation>
    <location>
        <begin position="978"/>
        <end position="982"/>
    </location>
</feature>
<keyword id="KW-0025">Alternative splicing</keyword>
<keyword id="KW-0963">Cytoplasm</keyword>
<keyword id="KW-0378">Hydrolase</keyword>
<keyword id="KW-0539">Nucleus</keyword>
<keyword id="KW-0645">Protease</keyword>
<keyword id="KW-1185">Reference proteome</keyword>
<keyword id="KW-0788">Thiol protease</keyword>
<keyword id="KW-0833">Ubl conjugation pathway</keyword>
<gene>
    <name type="primary">usp15</name>
</gene>
<dbReference type="EC" id="3.4.19.12" evidence="1"/>
<dbReference type="EMBL" id="AAMC01103598">
    <property type="status" value="NOT_ANNOTATED_CDS"/>
    <property type="molecule type" value="Genomic_DNA"/>
</dbReference>
<dbReference type="EMBL" id="AAMC01103599">
    <property type="status" value="NOT_ANNOTATED_CDS"/>
    <property type="molecule type" value="Genomic_DNA"/>
</dbReference>
<dbReference type="EMBL" id="AAMC01103600">
    <property type="status" value="NOT_ANNOTATED_CDS"/>
    <property type="molecule type" value="Genomic_DNA"/>
</dbReference>
<dbReference type="EMBL" id="AAMC01103601">
    <property type="status" value="NOT_ANNOTATED_CDS"/>
    <property type="molecule type" value="Genomic_DNA"/>
</dbReference>
<dbReference type="EMBL" id="BC166318">
    <property type="protein sequence ID" value="AAI66318.1"/>
    <property type="molecule type" value="mRNA"/>
</dbReference>
<dbReference type="RefSeq" id="NP_001121498.1">
    <property type="nucleotide sequence ID" value="NM_001128026.1"/>
</dbReference>
<dbReference type="RefSeq" id="XP_012814097.1">
    <molecule id="F6Z5C0-1"/>
    <property type="nucleotide sequence ID" value="XM_012958643.3"/>
</dbReference>
<dbReference type="RefSeq" id="XP_012814098.1">
    <molecule id="F6Z5C0-2"/>
    <property type="nucleotide sequence ID" value="XM_012958644.3"/>
</dbReference>
<dbReference type="SMR" id="F6Z5C0"/>
<dbReference type="FunCoup" id="F6Z5C0">
    <property type="interactions" value="3880"/>
</dbReference>
<dbReference type="STRING" id="8364.ENSXETP00000007892"/>
<dbReference type="MEROPS" id="C19.022"/>
<dbReference type="PaxDb" id="8364-ENSXETP00000061641"/>
<dbReference type="GeneID" id="100158604"/>
<dbReference type="KEGG" id="xtr:100158604"/>
<dbReference type="AGR" id="Xenbase:XB-GENE-1008519"/>
<dbReference type="CTD" id="9958"/>
<dbReference type="Xenbase" id="XB-GENE-1008519">
    <property type="gene designation" value="usp15"/>
</dbReference>
<dbReference type="eggNOG" id="KOG1870">
    <property type="taxonomic scope" value="Eukaryota"/>
</dbReference>
<dbReference type="InParanoid" id="F6Z5C0"/>
<dbReference type="OrthoDB" id="265776at2759"/>
<dbReference type="Reactome" id="R-XTR-5689880">
    <property type="pathway name" value="Ub-specific processing proteases"/>
</dbReference>
<dbReference type="Proteomes" id="UP000008143">
    <property type="component" value="Chromosome 3"/>
</dbReference>
<dbReference type="Bgee" id="ENSXETG00000021472">
    <property type="expression patterns" value="Expressed in heart and 12 other cell types or tissues"/>
</dbReference>
<dbReference type="ExpressionAtlas" id="F6Z5C0">
    <property type="expression patterns" value="differential"/>
</dbReference>
<dbReference type="GO" id="GO:0005737">
    <property type="term" value="C:cytoplasm"/>
    <property type="evidence" value="ECO:0000250"/>
    <property type="project" value="UniProtKB"/>
</dbReference>
<dbReference type="GO" id="GO:0005634">
    <property type="term" value="C:nucleus"/>
    <property type="evidence" value="ECO:0000250"/>
    <property type="project" value="UniProtKB"/>
</dbReference>
<dbReference type="GO" id="GO:0004843">
    <property type="term" value="F:cysteine-type deubiquitinase activity"/>
    <property type="evidence" value="ECO:0000250"/>
    <property type="project" value="UniProtKB"/>
</dbReference>
<dbReference type="GO" id="GO:0004197">
    <property type="term" value="F:cysteine-type endopeptidase activity"/>
    <property type="evidence" value="ECO:0000250"/>
    <property type="project" value="UniProtKB"/>
</dbReference>
<dbReference type="GO" id="GO:0030509">
    <property type="term" value="P:BMP signaling pathway"/>
    <property type="evidence" value="ECO:0000250"/>
    <property type="project" value="UniProtKB"/>
</dbReference>
<dbReference type="GO" id="GO:0035520">
    <property type="term" value="P:monoubiquitinated protein deubiquitination"/>
    <property type="evidence" value="ECO:0000250"/>
    <property type="project" value="UniProtKB"/>
</dbReference>
<dbReference type="GO" id="GO:0030512">
    <property type="term" value="P:negative regulation of transforming growth factor beta receptor signaling pathway"/>
    <property type="evidence" value="ECO:0000250"/>
    <property type="project" value="UniProtKB"/>
</dbReference>
<dbReference type="GO" id="GO:0006508">
    <property type="term" value="P:proteolysis"/>
    <property type="evidence" value="ECO:0007669"/>
    <property type="project" value="UniProtKB-KW"/>
</dbReference>
<dbReference type="GO" id="GO:0140673">
    <property type="term" value="P:transcription elongation-coupled chromatin remodeling"/>
    <property type="evidence" value="ECO:0000250"/>
    <property type="project" value="UniProtKB"/>
</dbReference>
<dbReference type="CDD" id="cd02674">
    <property type="entry name" value="Peptidase_C19R"/>
    <property type="match status" value="1"/>
</dbReference>
<dbReference type="FunFam" id="3.30.2230.10:FF:000003">
    <property type="entry name" value="ubiquitin carboxyl-terminal hydrolase 15 isoform X1"/>
    <property type="match status" value="1"/>
</dbReference>
<dbReference type="FunFam" id="3.90.70.10:FF:000013">
    <property type="entry name" value="ubiquitin carboxyl-terminal hydrolase 15 isoform X1"/>
    <property type="match status" value="1"/>
</dbReference>
<dbReference type="FunFam" id="3.90.70.10:FF:000034">
    <property type="entry name" value="ubiquitin carboxyl-terminal hydrolase 15 isoform X1"/>
    <property type="match status" value="1"/>
</dbReference>
<dbReference type="FunFam" id="3.10.20.90:FF:000020">
    <property type="entry name" value="ubiquitin carboxyl-terminal hydrolase 15 isoform X2"/>
    <property type="match status" value="1"/>
</dbReference>
<dbReference type="Gene3D" id="3.90.70.10">
    <property type="entry name" value="Cysteine proteinases"/>
    <property type="match status" value="2"/>
</dbReference>
<dbReference type="Gene3D" id="3.30.2230.10">
    <property type="entry name" value="DUSP-like"/>
    <property type="match status" value="1"/>
</dbReference>
<dbReference type="Gene3D" id="3.10.20.90">
    <property type="entry name" value="Phosphatidylinositol 3-kinase Catalytic Subunit, Chain A, domain 1"/>
    <property type="match status" value="1"/>
</dbReference>
<dbReference type="InterPro" id="IPR035927">
    <property type="entry name" value="DUSP-like_sf"/>
</dbReference>
<dbReference type="InterPro" id="IPR038765">
    <property type="entry name" value="Papain-like_cys_pep_sf"/>
</dbReference>
<dbReference type="InterPro" id="IPR006615">
    <property type="entry name" value="Pept_C19_DUSP"/>
</dbReference>
<dbReference type="InterPro" id="IPR001394">
    <property type="entry name" value="Peptidase_C19_UCH"/>
</dbReference>
<dbReference type="InterPro" id="IPR050185">
    <property type="entry name" value="Ub_carboxyl-term_hydrolase"/>
</dbReference>
<dbReference type="InterPro" id="IPR028135">
    <property type="entry name" value="Ub_USP-typ"/>
</dbReference>
<dbReference type="InterPro" id="IPR029071">
    <property type="entry name" value="Ubiquitin-like_domsf"/>
</dbReference>
<dbReference type="InterPro" id="IPR029346">
    <property type="entry name" value="USP_C"/>
</dbReference>
<dbReference type="InterPro" id="IPR018200">
    <property type="entry name" value="USP_CS"/>
</dbReference>
<dbReference type="InterPro" id="IPR028889">
    <property type="entry name" value="USP_dom"/>
</dbReference>
<dbReference type="PANTHER" id="PTHR21646">
    <property type="entry name" value="UBIQUITIN CARBOXYL-TERMINAL HYDROLASE"/>
    <property type="match status" value="1"/>
</dbReference>
<dbReference type="PANTHER" id="PTHR21646:SF28">
    <property type="entry name" value="UBIQUITIN CARBOXYL-TERMINAL HYDROLASE 15"/>
    <property type="match status" value="1"/>
</dbReference>
<dbReference type="Pfam" id="PF06337">
    <property type="entry name" value="DUSP"/>
    <property type="match status" value="1"/>
</dbReference>
<dbReference type="Pfam" id="PF14836">
    <property type="entry name" value="Ubiquitin_3"/>
    <property type="match status" value="1"/>
</dbReference>
<dbReference type="Pfam" id="PF00443">
    <property type="entry name" value="UCH"/>
    <property type="match status" value="1"/>
</dbReference>
<dbReference type="Pfam" id="PF14533">
    <property type="entry name" value="USP7_C2"/>
    <property type="match status" value="1"/>
</dbReference>
<dbReference type="SMART" id="SM00695">
    <property type="entry name" value="DUSP"/>
    <property type="match status" value="1"/>
</dbReference>
<dbReference type="SUPFAM" id="SSF54001">
    <property type="entry name" value="Cysteine proteinases"/>
    <property type="match status" value="1"/>
</dbReference>
<dbReference type="SUPFAM" id="SSF143791">
    <property type="entry name" value="DUSP-like"/>
    <property type="match status" value="1"/>
</dbReference>
<dbReference type="SUPFAM" id="SSF54236">
    <property type="entry name" value="Ubiquitin-like"/>
    <property type="match status" value="1"/>
</dbReference>
<dbReference type="PROSITE" id="PS51283">
    <property type="entry name" value="DUSP"/>
    <property type="match status" value="1"/>
</dbReference>
<dbReference type="PROSITE" id="PS00972">
    <property type="entry name" value="USP_1"/>
    <property type="match status" value="1"/>
</dbReference>
<dbReference type="PROSITE" id="PS00973">
    <property type="entry name" value="USP_2"/>
    <property type="match status" value="1"/>
</dbReference>
<dbReference type="PROSITE" id="PS50235">
    <property type="entry name" value="USP_3"/>
    <property type="match status" value="1"/>
</dbReference>
<name>UBP15_XENTR</name>
<accession>F6Z5C0</accession>
<accession>B2GUK6</accession>
<accession>F6ZNA0</accession>
<reference key="1">
    <citation type="journal article" date="2010" name="Science">
        <title>The genome of the Western clawed frog Xenopus tropicalis.</title>
        <authorList>
            <person name="Hellsten U."/>
            <person name="Harland R.M."/>
            <person name="Gilchrist M.J."/>
            <person name="Hendrix D."/>
            <person name="Jurka J."/>
            <person name="Kapitonov V."/>
            <person name="Ovcharenko I."/>
            <person name="Putnam N.H."/>
            <person name="Shu S."/>
            <person name="Taher L."/>
            <person name="Blitz I.L."/>
            <person name="Blumberg B."/>
            <person name="Dichmann D.S."/>
            <person name="Dubchak I."/>
            <person name="Amaya E."/>
            <person name="Detter J.C."/>
            <person name="Fletcher R."/>
            <person name="Gerhard D.S."/>
            <person name="Goodstein D."/>
            <person name="Graves T."/>
            <person name="Grigoriev I.V."/>
            <person name="Grimwood J."/>
            <person name="Kawashima T."/>
            <person name="Lindquist E."/>
            <person name="Lucas S.M."/>
            <person name="Mead P.E."/>
            <person name="Mitros T."/>
            <person name="Ogino H."/>
            <person name="Ohta Y."/>
            <person name="Poliakov A.V."/>
            <person name="Pollet N."/>
            <person name="Robert J."/>
            <person name="Salamov A."/>
            <person name="Sater A.K."/>
            <person name="Schmutz J."/>
            <person name="Terry A."/>
            <person name="Vize P.D."/>
            <person name="Warren W.C."/>
            <person name="Wells D."/>
            <person name="Wills A."/>
            <person name="Wilson R.K."/>
            <person name="Zimmerman L.B."/>
            <person name="Zorn A.M."/>
            <person name="Grainger R."/>
            <person name="Grammer T."/>
            <person name="Khokha M.K."/>
            <person name="Richardson P.M."/>
            <person name="Rokhsar D.S."/>
        </authorList>
    </citation>
    <scope>NUCLEOTIDE SEQUENCE [LARGE SCALE GENOMIC DNA]</scope>
</reference>
<reference key="2">
    <citation type="submission" date="2008-04" db="EMBL/GenBank/DDBJ databases">
        <authorList>
            <consortium name="NIH - Xenopus Gene Collection (XGC) project"/>
        </authorList>
    </citation>
    <scope>NUCLEOTIDE SEQUENCE [LARGE SCALE MRNA] (ISOFORM 2)</scope>
    <source>
        <tissue>Embryo</tissue>
    </source>
</reference>
<organism>
    <name type="scientific">Xenopus tropicalis</name>
    <name type="common">Western clawed frog</name>
    <name type="synonym">Silurana tropicalis</name>
    <dbReference type="NCBI Taxonomy" id="8364"/>
    <lineage>
        <taxon>Eukaryota</taxon>
        <taxon>Metazoa</taxon>
        <taxon>Chordata</taxon>
        <taxon>Craniata</taxon>
        <taxon>Vertebrata</taxon>
        <taxon>Euteleostomi</taxon>
        <taxon>Amphibia</taxon>
        <taxon>Batrachia</taxon>
        <taxon>Anura</taxon>
        <taxon>Pipoidea</taxon>
        <taxon>Pipidae</taxon>
        <taxon>Xenopodinae</taxon>
        <taxon>Xenopus</taxon>
        <taxon>Silurana</taxon>
    </lineage>
</organism>
<comment type="function">
    <text evidence="1">Hydrolase that removes conjugated ubiquitin from target proteins and regulates various pathways such as the TGF-beta receptor signaling and NF-kappa-B pathways. Acts as a key regulator of TGF-beta receptor signaling pathway, but the precise mechanism is still unclear: according to a report, acts by promoting deubiquitination of monoubiquitinated R-SMADs, thereby alleviating inhibition of R-SMADs and promoting activation of TGF-beta target genes. According to another reports, regulates the TGF-beta receptor signaling pathway by mediating deubiquitination and stabilization of tgfbr1, leading to an enhanced TGF-beta signal. May also regulate gene expression and/or DNA repair through the deubiquitination of histone H2B. Involved in endosome organization by mediating deubiquitination of rnf26 target(s), releasing vesicles that are restrained in the perinuclear region.</text>
</comment>
<comment type="catalytic activity">
    <reaction evidence="1">
        <text>Thiol-dependent hydrolysis of ester, thioester, amide, peptide and isopeptide bonds formed by the C-terminal Gly of ubiquitin (a 76-residue protein attached to proteins as an intracellular targeting signal).</text>
        <dbReference type="EC" id="3.4.19.12"/>
    </reaction>
</comment>
<comment type="subcellular location">
    <subcellularLocation>
        <location evidence="1">Cytoplasm</location>
    </subcellularLocation>
    <subcellularLocation>
        <location evidence="1">Nucleus</location>
    </subcellularLocation>
</comment>
<comment type="alternative products">
    <event type="alternative splicing"/>
    <isoform>
        <id>F6Z5C0-1</id>
        <name>1</name>
        <sequence type="displayed"/>
    </isoform>
    <isoform>
        <id>F6Z5C0-2</id>
        <name>2</name>
        <sequence type="described" ref="VSP_044519"/>
    </isoform>
</comment>
<comment type="similarity">
    <text evidence="7">Belongs to the peptidase C19 family.</text>
</comment>
<sequence>MAEGGVVDLETQRSEVSALLKTPLRRGDTWYLIDSRWFKQWKKYVGFDSWDKYQMGDQNVYPGPIDNSGLLKDTDTQSLKEHLIDELDYILLPTEGWNKLVSWYSVVESQQPIARKVVEQGMFVKHCKVEVYLTELKLCENGNMNNVVTRRFSKADTIDMIEKEMRTIFSIPDEKETRLWNKYMSNTFEPLNKPESTIQDAGLYQGQMLVIEQKNQEGQWPRGSMPKSSGIPNFSTLPKISPSSLSNNYNNFNSRIMKNSNYCLPSYAAYKNYEYSEPGRHNEQPGLCGLSNLGNTCFMNSAIQCLSNTPPLTEYFLNDKYQDELNMDNPLGMRGEIAKSYAELIKQMWSGKYSYVTPRAFKTQVGRFAPQFSGYQQQDCQELLAFLLDGLHEDLNRIRKKPYIQLKDADGRPDKVVAEEAWENHIKRNDSIIVDIFHGLFKSTLVCPECSKISVTFDPFCYLTLPLPMKKERALEVYLVRMDPLAKPMQYKVIVPKIGNIMDLCTALSSLSGIAPEKMVVTDIYNHRFHRIFAMDENLSSIMERDDIYVFETSINRTEDTEQVIIPVYLREKFRHTSYSHHHGSTLFGQPFLITVPRNITEDKLYNLLLLRMCRYVKATNDTEENDGSLHCNKEHTVNGNGPNGIHEEGSPSEMETDEPDDESSQDQELPSENENSQSEDSVGGDNDSENGLCTEDTCKGQSVTGQKKRLFTFQFSNLGSSDITYIKDDTKYIRFDERQLRLDERSYLALDWDPKLKKKFFDENAAEDFEKHESVDFTPQKKAFMKLKDCIELFTTKEKLGAEDPWYCPNCKEHQQATKKLDLWSLPPVLVVHLKRFSYSRYMRDKLDTLVDFPISDLDMSTFLINPNAGPCCYNLIAVSNHYGGMGGGHYTAFAKNKDDGKWYYFDDSSVSTASEEQIVSKAAYVLFYQRQDTITGTGFFPLDKEVKQGASAATGAPHESDEESNEDENDIENENCMHTN</sequence>